<gene>
    <name evidence="1" type="primary">moaC</name>
    <name type="ordered locus">CPR_2052</name>
</gene>
<comment type="function">
    <text evidence="1">Catalyzes the conversion of (8S)-3',8-cyclo-7,8-dihydroguanosine 5'-triphosphate to cyclic pyranopterin monophosphate (cPMP).</text>
</comment>
<comment type="catalytic activity">
    <reaction evidence="1">
        <text>(8S)-3',8-cyclo-7,8-dihydroguanosine 5'-triphosphate = cyclic pyranopterin phosphate + diphosphate</text>
        <dbReference type="Rhea" id="RHEA:49580"/>
        <dbReference type="ChEBI" id="CHEBI:33019"/>
        <dbReference type="ChEBI" id="CHEBI:59648"/>
        <dbReference type="ChEBI" id="CHEBI:131766"/>
        <dbReference type="EC" id="4.6.1.17"/>
    </reaction>
</comment>
<comment type="pathway">
    <text evidence="1">Cofactor biosynthesis; molybdopterin biosynthesis.</text>
</comment>
<comment type="subunit">
    <text evidence="1">Homohexamer; trimer of dimers.</text>
</comment>
<comment type="similarity">
    <text evidence="1">Belongs to the MoaC family.</text>
</comment>
<proteinExistence type="inferred from homology"/>
<name>MOAC_CLOPS</name>
<accession>Q0SR96</accession>
<sequence length="158" mass="17013">MDNKLTHFDNKGNAVMVDVSNKNETERIAIATGTVKASSETIELIKSDQIGKGDVLGVARVAGIMAMKNTSNLIPMCHPVMITGSSIDFEIDSEKNEIRITATSKVVHKTGVEMEALTGVSIAALTIYDMCKAVDKRMVIGDIHLVKKLGGKSGEFNF</sequence>
<reference key="1">
    <citation type="journal article" date="2006" name="Genome Res.">
        <title>Skewed genomic variability in strains of the toxigenic bacterial pathogen, Clostridium perfringens.</title>
        <authorList>
            <person name="Myers G.S.A."/>
            <person name="Rasko D.A."/>
            <person name="Cheung J.K."/>
            <person name="Ravel J."/>
            <person name="Seshadri R."/>
            <person name="DeBoy R.T."/>
            <person name="Ren Q."/>
            <person name="Varga J."/>
            <person name="Awad M.M."/>
            <person name="Brinkac L.M."/>
            <person name="Daugherty S.C."/>
            <person name="Haft D.H."/>
            <person name="Dodson R.J."/>
            <person name="Madupu R."/>
            <person name="Nelson W.C."/>
            <person name="Rosovitz M.J."/>
            <person name="Sullivan S.A."/>
            <person name="Khouri H."/>
            <person name="Dimitrov G.I."/>
            <person name="Watkins K.L."/>
            <person name="Mulligan S."/>
            <person name="Benton J."/>
            <person name="Radune D."/>
            <person name="Fisher D.J."/>
            <person name="Atkins H.S."/>
            <person name="Hiscox T."/>
            <person name="Jost B.H."/>
            <person name="Billington S.J."/>
            <person name="Songer J.G."/>
            <person name="McClane B.A."/>
            <person name="Titball R.W."/>
            <person name="Rood J.I."/>
            <person name="Melville S.B."/>
            <person name="Paulsen I.T."/>
        </authorList>
    </citation>
    <scope>NUCLEOTIDE SEQUENCE [LARGE SCALE GENOMIC DNA]</scope>
    <source>
        <strain>SM101 / Type A</strain>
    </source>
</reference>
<evidence type="ECO:0000255" key="1">
    <source>
        <dbReference type="HAMAP-Rule" id="MF_01224"/>
    </source>
</evidence>
<keyword id="KW-0456">Lyase</keyword>
<keyword id="KW-0501">Molybdenum cofactor biosynthesis</keyword>
<organism>
    <name type="scientific">Clostridium perfringens (strain SM101 / Type A)</name>
    <dbReference type="NCBI Taxonomy" id="289380"/>
    <lineage>
        <taxon>Bacteria</taxon>
        <taxon>Bacillati</taxon>
        <taxon>Bacillota</taxon>
        <taxon>Clostridia</taxon>
        <taxon>Eubacteriales</taxon>
        <taxon>Clostridiaceae</taxon>
        <taxon>Clostridium</taxon>
    </lineage>
</organism>
<feature type="chain" id="PRO_1000054088" description="Cyclic pyranopterin monophosphate synthase">
    <location>
        <begin position="1"/>
        <end position="158"/>
    </location>
</feature>
<feature type="active site" evidence="1">
    <location>
        <position position="129"/>
    </location>
</feature>
<feature type="binding site" evidence="1">
    <location>
        <begin position="76"/>
        <end position="78"/>
    </location>
    <ligand>
        <name>substrate</name>
    </ligand>
</feature>
<feature type="binding site" evidence="1">
    <location>
        <begin position="114"/>
        <end position="115"/>
    </location>
    <ligand>
        <name>substrate</name>
    </ligand>
</feature>
<protein>
    <recommendedName>
        <fullName evidence="1">Cyclic pyranopterin monophosphate synthase</fullName>
        <ecNumber evidence="1">4.6.1.17</ecNumber>
    </recommendedName>
    <alternativeName>
        <fullName evidence="1">Molybdenum cofactor biosynthesis protein C</fullName>
    </alternativeName>
</protein>
<dbReference type="EC" id="4.6.1.17" evidence="1"/>
<dbReference type="EMBL" id="CP000312">
    <property type="protein sequence ID" value="ABG87070.1"/>
    <property type="molecule type" value="Genomic_DNA"/>
</dbReference>
<dbReference type="RefSeq" id="WP_011592899.1">
    <property type="nucleotide sequence ID" value="NC_008262.1"/>
</dbReference>
<dbReference type="SMR" id="Q0SR96"/>
<dbReference type="KEGG" id="cpr:CPR_2052"/>
<dbReference type="UniPathway" id="UPA00344"/>
<dbReference type="Proteomes" id="UP000001824">
    <property type="component" value="Chromosome"/>
</dbReference>
<dbReference type="GO" id="GO:0061799">
    <property type="term" value="F:cyclic pyranopterin monophosphate synthase activity"/>
    <property type="evidence" value="ECO:0007669"/>
    <property type="project" value="UniProtKB-UniRule"/>
</dbReference>
<dbReference type="GO" id="GO:0006777">
    <property type="term" value="P:Mo-molybdopterin cofactor biosynthetic process"/>
    <property type="evidence" value="ECO:0007669"/>
    <property type="project" value="UniProtKB-UniRule"/>
</dbReference>
<dbReference type="CDD" id="cd01420">
    <property type="entry name" value="MoaC_PE"/>
    <property type="match status" value="1"/>
</dbReference>
<dbReference type="Gene3D" id="3.30.70.640">
    <property type="entry name" value="Molybdopterin cofactor biosynthesis C (MoaC) domain"/>
    <property type="match status" value="1"/>
</dbReference>
<dbReference type="HAMAP" id="MF_01224_B">
    <property type="entry name" value="MoaC_B"/>
    <property type="match status" value="1"/>
</dbReference>
<dbReference type="InterPro" id="IPR023045">
    <property type="entry name" value="MoaC"/>
</dbReference>
<dbReference type="InterPro" id="IPR047594">
    <property type="entry name" value="MoaC_bact/euk"/>
</dbReference>
<dbReference type="InterPro" id="IPR036522">
    <property type="entry name" value="MoaC_sf"/>
</dbReference>
<dbReference type="InterPro" id="IPR050105">
    <property type="entry name" value="MoCo_biosynth_MoaA/MoaC"/>
</dbReference>
<dbReference type="InterPro" id="IPR002820">
    <property type="entry name" value="Mopterin_CF_biosynth-C_dom"/>
</dbReference>
<dbReference type="NCBIfam" id="TIGR00581">
    <property type="entry name" value="moaC"/>
    <property type="match status" value="1"/>
</dbReference>
<dbReference type="NCBIfam" id="NF006870">
    <property type="entry name" value="PRK09364.1"/>
    <property type="match status" value="1"/>
</dbReference>
<dbReference type="PANTHER" id="PTHR22960:SF29">
    <property type="entry name" value="CYCLIC PYRANOPTERIN MONOPHOSPHATE SYNTHASE"/>
    <property type="match status" value="1"/>
</dbReference>
<dbReference type="PANTHER" id="PTHR22960">
    <property type="entry name" value="MOLYBDOPTERIN COFACTOR SYNTHESIS PROTEIN A"/>
    <property type="match status" value="1"/>
</dbReference>
<dbReference type="Pfam" id="PF01967">
    <property type="entry name" value="MoaC"/>
    <property type="match status" value="1"/>
</dbReference>
<dbReference type="SUPFAM" id="SSF55040">
    <property type="entry name" value="Molybdenum cofactor biosynthesis protein C, MoaC"/>
    <property type="match status" value="1"/>
</dbReference>